<reference key="1">
    <citation type="journal article" date="2000" name="Nature">
        <title>Genome sequence of the endocellular bacterial symbiont of aphids Buchnera sp. APS.</title>
        <authorList>
            <person name="Shigenobu S."/>
            <person name="Watanabe H."/>
            <person name="Hattori M."/>
            <person name="Sakaki Y."/>
            <person name="Ishikawa H."/>
        </authorList>
    </citation>
    <scope>NUCLEOTIDE SEQUENCE [LARGE SCALE GENOMIC DNA]</scope>
    <source>
        <strain>APS</strain>
    </source>
</reference>
<proteinExistence type="inferred from homology"/>
<gene>
    <name evidence="2" type="primary">nuoB</name>
    <name type="ordered locus">BU155</name>
</gene>
<evidence type="ECO:0000250" key="1"/>
<evidence type="ECO:0000255" key="2">
    <source>
        <dbReference type="HAMAP-Rule" id="MF_01356"/>
    </source>
</evidence>
<accession>P57253</accession>
<comment type="function">
    <text evidence="1">NDH-1 shuttles electrons from NADH, via FMN and iron-sulfur (Fe-S) centers, to quinones in the respiratory chain. Couples the redox reaction to proton translocation (for every two electrons transferred, four hydrogen ions are translocated across the cytoplasmic membrane), and thus conserves the redox energy in a proton gradient (By similarity).</text>
</comment>
<comment type="catalytic activity">
    <reaction evidence="2">
        <text>a quinone + NADH + 5 H(+)(in) = a quinol + NAD(+) + 4 H(+)(out)</text>
        <dbReference type="Rhea" id="RHEA:57888"/>
        <dbReference type="ChEBI" id="CHEBI:15378"/>
        <dbReference type="ChEBI" id="CHEBI:24646"/>
        <dbReference type="ChEBI" id="CHEBI:57540"/>
        <dbReference type="ChEBI" id="CHEBI:57945"/>
        <dbReference type="ChEBI" id="CHEBI:132124"/>
    </reaction>
</comment>
<comment type="cofactor">
    <cofactor evidence="2">
        <name>[4Fe-4S] cluster</name>
        <dbReference type="ChEBI" id="CHEBI:49883"/>
    </cofactor>
    <text evidence="2">Binds 1 [4Fe-4S] cluster.</text>
</comment>
<comment type="subunit">
    <text evidence="2">NDH-1 is composed of 13 different subunits. Subunits NuoB, CD, E, F, and G constitute the peripheral sector of the complex.</text>
</comment>
<comment type="subcellular location">
    <subcellularLocation>
        <location evidence="2">Cell membrane</location>
        <topology evidence="2">Peripheral membrane protein</topology>
        <orientation evidence="2">Cytoplasmic side</orientation>
    </subcellularLocation>
</comment>
<comment type="similarity">
    <text evidence="2">Belongs to the complex I 20 kDa subunit family.</text>
</comment>
<sequence length="224" mass="25597">MNYTLTKADSDNNNKKYPKQTIESVSDPLEEYLKKNIFMGKITQLLHKLVNWGRKNSLWPYNFGLSCCYVEMVSAFTSVHDVARFGSEVLRASPRQADVMVIAGTPFIKMAPVIQRLYDQMLEPKWVISMGACANSGGMYDIYSVVQGVDKFLPVDIYIPGCPPRPEAYMQALILLQKLINEERRPLSWVIGEQGVYHKKMPSERVQKRSKRINIINLSTSEKI</sequence>
<name>NUOB_BUCAI</name>
<protein>
    <recommendedName>
        <fullName evidence="2">NADH-quinone oxidoreductase subunit B</fullName>
        <ecNumber evidence="2">7.1.1.-</ecNumber>
    </recommendedName>
    <alternativeName>
        <fullName evidence="2">NADH dehydrogenase I subunit B</fullName>
    </alternativeName>
    <alternativeName>
        <fullName evidence="2">NDH-1 subunit B</fullName>
    </alternativeName>
</protein>
<keyword id="KW-0004">4Fe-4S</keyword>
<keyword id="KW-1003">Cell membrane</keyword>
<keyword id="KW-0408">Iron</keyword>
<keyword id="KW-0411">Iron-sulfur</keyword>
<keyword id="KW-0472">Membrane</keyword>
<keyword id="KW-0479">Metal-binding</keyword>
<keyword id="KW-0520">NAD</keyword>
<keyword id="KW-0874">Quinone</keyword>
<keyword id="KW-1185">Reference proteome</keyword>
<keyword id="KW-1278">Translocase</keyword>
<keyword id="KW-0813">Transport</keyword>
<keyword id="KW-0830">Ubiquinone</keyword>
<dbReference type="EC" id="7.1.1.-" evidence="2"/>
<dbReference type="EMBL" id="BA000003">
    <property type="protein sequence ID" value="BAB12873.1"/>
    <property type="molecule type" value="Genomic_DNA"/>
</dbReference>
<dbReference type="RefSeq" id="NP_239987.1">
    <property type="nucleotide sequence ID" value="NC_002528.1"/>
</dbReference>
<dbReference type="RefSeq" id="WP_009874111.1">
    <property type="nucleotide sequence ID" value="NZ_AP036055.1"/>
</dbReference>
<dbReference type="SMR" id="P57253"/>
<dbReference type="STRING" id="563178.BUAP5A_153"/>
<dbReference type="EnsemblBacteria" id="BAB12873">
    <property type="protein sequence ID" value="BAB12873"/>
    <property type="gene ID" value="BAB12873"/>
</dbReference>
<dbReference type="KEGG" id="buc:BU155"/>
<dbReference type="PATRIC" id="fig|107806.10.peg.165"/>
<dbReference type="eggNOG" id="COG0377">
    <property type="taxonomic scope" value="Bacteria"/>
</dbReference>
<dbReference type="HOGENOM" id="CLU_055737_7_3_6"/>
<dbReference type="Proteomes" id="UP000001806">
    <property type="component" value="Chromosome"/>
</dbReference>
<dbReference type="GO" id="GO:0005886">
    <property type="term" value="C:plasma membrane"/>
    <property type="evidence" value="ECO:0007669"/>
    <property type="project" value="UniProtKB-SubCell"/>
</dbReference>
<dbReference type="GO" id="GO:0045271">
    <property type="term" value="C:respiratory chain complex I"/>
    <property type="evidence" value="ECO:0007669"/>
    <property type="project" value="TreeGrafter"/>
</dbReference>
<dbReference type="GO" id="GO:0051539">
    <property type="term" value="F:4 iron, 4 sulfur cluster binding"/>
    <property type="evidence" value="ECO:0007669"/>
    <property type="project" value="UniProtKB-KW"/>
</dbReference>
<dbReference type="GO" id="GO:0005506">
    <property type="term" value="F:iron ion binding"/>
    <property type="evidence" value="ECO:0007669"/>
    <property type="project" value="UniProtKB-UniRule"/>
</dbReference>
<dbReference type="GO" id="GO:0008137">
    <property type="term" value="F:NADH dehydrogenase (ubiquinone) activity"/>
    <property type="evidence" value="ECO:0007669"/>
    <property type="project" value="InterPro"/>
</dbReference>
<dbReference type="GO" id="GO:0050136">
    <property type="term" value="F:NADH:ubiquinone reductase (non-electrogenic) activity"/>
    <property type="evidence" value="ECO:0007669"/>
    <property type="project" value="UniProtKB-UniRule"/>
</dbReference>
<dbReference type="GO" id="GO:0048038">
    <property type="term" value="F:quinone binding"/>
    <property type="evidence" value="ECO:0007669"/>
    <property type="project" value="UniProtKB-KW"/>
</dbReference>
<dbReference type="GO" id="GO:0009060">
    <property type="term" value="P:aerobic respiration"/>
    <property type="evidence" value="ECO:0007669"/>
    <property type="project" value="TreeGrafter"/>
</dbReference>
<dbReference type="GO" id="GO:0015990">
    <property type="term" value="P:electron transport coupled proton transport"/>
    <property type="evidence" value="ECO:0007669"/>
    <property type="project" value="TreeGrafter"/>
</dbReference>
<dbReference type="FunFam" id="3.40.50.12280:FF:000002">
    <property type="entry name" value="NADH-quinone oxidoreductase subunit B"/>
    <property type="match status" value="1"/>
</dbReference>
<dbReference type="Gene3D" id="3.40.50.12280">
    <property type="match status" value="1"/>
</dbReference>
<dbReference type="HAMAP" id="MF_01356">
    <property type="entry name" value="NDH1_NuoB"/>
    <property type="match status" value="1"/>
</dbReference>
<dbReference type="InterPro" id="IPR006137">
    <property type="entry name" value="NADH_UbQ_OxRdtase-like_20kDa"/>
</dbReference>
<dbReference type="InterPro" id="IPR006138">
    <property type="entry name" value="NADH_UQ_OxRdtase_20Kd_su"/>
</dbReference>
<dbReference type="NCBIfam" id="TIGR01957">
    <property type="entry name" value="nuoB_fam"/>
    <property type="match status" value="1"/>
</dbReference>
<dbReference type="NCBIfam" id="NF005012">
    <property type="entry name" value="PRK06411.1"/>
    <property type="match status" value="1"/>
</dbReference>
<dbReference type="PANTHER" id="PTHR11995">
    <property type="entry name" value="NADH DEHYDROGENASE"/>
    <property type="match status" value="1"/>
</dbReference>
<dbReference type="PANTHER" id="PTHR11995:SF14">
    <property type="entry name" value="NADH DEHYDROGENASE [UBIQUINONE] IRON-SULFUR PROTEIN 7, MITOCHONDRIAL"/>
    <property type="match status" value="1"/>
</dbReference>
<dbReference type="Pfam" id="PF01058">
    <property type="entry name" value="Oxidored_q6"/>
    <property type="match status" value="1"/>
</dbReference>
<dbReference type="SUPFAM" id="SSF56770">
    <property type="entry name" value="HydA/Nqo6-like"/>
    <property type="match status" value="1"/>
</dbReference>
<dbReference type="PROSITE" id="PS01150">
    <property type="entry name" value="COMPLEX1_20K"/>
    <property type="match status" value="1"/>
</dbReference>
<organism>
    <name type="scientific">Buchnera aphidicola subsp. Acyrthosiphon pisum (strain APS)</name>
    <name type="common">Acyrthosiphon pisum symbiotic bacterium</name>
    <dbReference type="NCBI Taxonomy" id="107806"/>
    <lineage>
        <taxon>Bacteria</taxon>
        <taxon>Pseudomonadati</taxon>
        <taxon>Pseudomonadota</taxon>
        <taxon>Gammaproteobacteria</taxon>
        <taxon>Enterobacterales</taxon>
        <taxon>Erwiniaceae</taxon>
        <taxon>Buchnera</taxon>
    </lineage>
</organism>
<feature type="chain" id="PRO_0000118769" description="NADH-quinone oxidoreductase subunit B">
    <location>
        <begin position="1"/>
        <end position="224"/>
    </location>
</feature>
<feature type="binding site" evidence="2">
    <location>
        <position position="67"/>
    </location>
    <ligand>
        <name>[4Fe-4S] cluster</name>
        <dbReference type="ChEBI" id="CHEBI:49883"/>
    </ligand>
</feature>
<feature type="binding site" evidence="2">
    <location>
        <position position="68"/>
    </location>
    <ligand>
        <name>[4Fe-4S] cluster</name>
        <dbReference type="ChEBI" id="CHEBI:49883"/>
    </ligand>
</feature>
<feature type="binding site" evidence="2">
    <location>
        <position position="133"/>
    </location>
    <ligand>
        <name>[4Fe-4S] cluster</name>
        <dbReference type="ChEBI" id="CHEBI:49883"/>
    </ligand>
</feature>
<feature type="binding site" evidence="2">
    <location>
        <position position="162"/>
    </location>
    <ligand>
        <name>[4Fe-4S] cluster</name>
        <dbReference type="ChEBI" id="CHEBI:49883"/>
    </ligand>
</feature>